<dbReference type="EMBL" id="AK005562">
    <property type="protein sequence ID" value="BAB24122.1"/>
    <property type="status" value="ALT_FRAME"/>
    <property type="molecule type" value="mRNA"/>
</dbReference>
<dbReference type="EMBL" id="BC055476">
    <property type="protein sequence ID" value="AAH55476.1"/>
    <property type="molecule type" value="mRNA"/>
</dbReference>
<dbReference type="CCDS" id="CCDS52055.1">
    <molecule id="Q7TNG5-2"/>
</dbReference>
<dbReference type="CCDS" id="CCDS85223.1">
    <molecule id="Q7TNG5-3"/>
</dbReference>
<dbReference type="CCDS" id="CCDS85224.1">
    <molecule id="Q7TNG5-1"/>
</dbReference>
<dbReference type="RefSeq" id="NP_001156468.1">
    <molecule id="Q7TNG5-1"/>
    <property type="nucleotide sequence ID" value="NM_001162996.2"/>
</dbReference>
<dbReference type="RefSeq" id="NP_001334511.1">
    <molecule id="Q7TNG5-3"/>
    <property type="nucleotide sequence ID" value="NM_001347582.2"/>
</dbReference>
<dbReference type="RefSeq" id="NP_082429.1">
    <molecule id="Q7TNG5-2"/>
    <property type="nucleotide sequence ID" value="NM_028153.2"/>
</dbReference>
<dbReference type="SMR" id="Q7TNG5"/>
<dbReference type="BioGRID" id="215217">
    <property type="interactions" value="1"/>
</dbReference>
<dbReference type="FunCoup" id="Q7TNG5">
    <property type="interactions" value="47"/>
</dbReference>
<dbReference type="IntAct" id="Q7TNG5">
    <property type="interactions" value="1"/>
</dbReference>
<dbReference type="STRING" id="10090.ENSMUSP00000112491"/>
<dbReference type="GlyGen" id="Q7TNG5">
    <property type="glycosylation" value="1 site, 1 O-linked glycan (1 site)"/>
</dbReference>
<dbReference type="iPTMnet" id="Q7TNG5"/>
<dbReference type="PhosphoSitePlus" id="Q7TNG5"/>
<dbReference type="SwissPalm" id="Q7TNG5"/>
<dbReference type="jPOST" id="Q7TNG5"/>
<dbReference type="PaxDb" id="10090-ENSMUSP00000037654"/>
<dbReference type="PeptideAtlas" id="Q7TNG5"/>
<dbReference type="ProteomicsDB" id="277824">
    <molecule id="Q7TNG5-1"/>
</dbReference>
<dbReference type="ProteomicsDB" id="277825">
    <molecule id="Q7TNG5-2"/>
</dbReference>
<dbReference type="ProteomicsDB" id="318304"/>
<dbReference type="Antibodypedia" id="2407">
    <property type="antibodies" value="153 antibodies from 25 providers"/>
</dbReference>
<dbReference type="DNASU" id="72205"/>
<dbReference type="Ensembl" id="ENSMUST00000048502.10">
    <molecule id="Q7TNG5-2"/>
    <property type="protein sequence ID" value="ENSMUSP00000037654.9"/>
    <property type="gene ID" value="ENSMUSG00000040811.16"/>
</dbReference>
<dbReference type="Ensembl" id="ENSMUST00000117338.8">
    <molecule id="Q7TNG5-3"/>
    <property type="protein sequence ID" value="ENSMUSP00000112491.2"/>
    <property type="gene ID" value="ENSMUSG00000040811.16"/>
</dbReference>
<dbReference type="Ensembl" id="ENSMUST00000120595.8">
    <molecule id="Q7TNG5-1"/>
    <property type="protein sequence ID" value="ENSMUSP00000112447.3"/>
    <property type="gene ID" value="ENSMUSG00000040811.16"/>
</dbReference>
<dbReference type="GeneID" id="72205"/>
<dbReference type="KEGG" id="mmu:72205"/>
<dbReference type="UCSC" id="uc009fkz.2">
    <molecule id="Q7TNG5-1"/>
    <property type="organism name" value="mouse"/>
</dbReference>
<dbReference type="UCSC" id="uc009fla.2">
    <molecule id="Q7TNG5-2"/>
    <property type="organism name" value="mouse"/>
</dbReference>
<dbReference type="AGR" id="MGI:1919455"/>
<dbReference type="CTD" id="24139"/>
<dbReference type="MGI" id="MGI:1919455">
    <property type="gene designation" value="Eml2"/>
</dbReference>
<dbReference type="VEuPathDB" id="HostDB:ENSMUSG00000040811"/>
<dbReference type="eggNOG" id="KOG2106">
    <property type="taxonomic scope" value="Eukaryota"/>
</dbReference>
<dbReference type="GeneTree" id="ENSGT00940000153887"/>
<dbReference type="HOGENOM" id="CLU_011754_0_0_1"/>
<dbReference type="InParanoid" id="Q7TNG5"/>
<dbReference type="OMA" id="RNIEWAT"/>
<dbReference type="OrthoDB" id="20757at9989"/>
<dbReference type="PhylomeDB" id="Q7TNG5"/>
<dbReference type="TreeFam" id="TF317832"/>
<dbReference type="BioGRID-ORCS" id="72205">
    <property type="hits" value="4 hits in 63 CRISPR screens"/>
</dbReference>
<dbReference type="ChiTaRS" id="Eml2">
    <property type="organism name" value="mouse"/>
</dbReference>
<dbReference type="PRO" id="PR:Q7TNG5"/>
<dbReference type="Proteomes" id="UP000000589">
    <property type="component" value="Chromosome 7"/>
</dbReference>
<dbReference type="RNAct" id="Q7TNG5">
    <property type="molecule type" value="protein"/>
</dbReference>
<dbReference type="Bgee" id="ENSMUSG00000040811">
    <property type="expression patterns" value="Expressed in dentate gyrus of hippocampal formation granule cell and 213 other cell types or tissues"/>
</dbReference>
<dbReference type="ExpressionAtlas" id="Q7TNG5">
    <property type="expression patterns" value="baseline and differential"/>
</dbReference>
<dbReference type="GO" id="GO:0005737">
    <property type="term" value="C:cytoplasm"/>
    <property type="evidence" value="ECO:0007669"/>
    <property type="project" value="UniProtKB-KW"/>
</dbReference>
<dbReference type="GO" id="GO:0005874">
    <property type="term" value="C:microtubule"/>
    <property type="evidence" value="ECO:0007669"/>
    <property type="project" value="UniProtKB-KW"/>
</dbReference>
<dbReference type="GO" id="GO:0072686">
    <property type="term" value="C:mitotic spindle"/>
    <property type="evidence" value="ECO:0007669"/>
    <property type="project" value="Ensembl"/>
</dbReference>
<dbReference type="GO" id="GO:0008017">
    <property type="term" value="F:microtubule binding"/>
    <property type="evidence" value="ECO:0000250"/>
    <property type="project" value="UniProtKB"/>
</dbReference>
<dbReference type="GO" id="GO:0015631">
    <property type="term" value="F:tubulin binding"/>
    <property type="evidence" value="ECO:0000250"/>
    <property type="project" value="UniProtKB"/>
</dbReference>
<dbReference type="GO" id="GO:0031115">
    <property type="term" value="P:negative regulation of microtubule polymerization"/>
    <property type="evidence" value="ECO:0000250"/>
    <property type="project" value="UniProtKB"/>
</dbReference>
<dbReference type="GO" id="GO:0010968">
    <property type="term" value="P:regulation of microtubule nucleation"/>
    <property type="evidence" value="ECO:0000250"/>
    <property type="project" value="UniProtKB"/>
</dbReference>
<dbReference type="FunFam" id="2.130.10.10:FF:000011">
    <property type="entry name" value="Echinoderm microtubule-associated protein-like 2 isoform 1"/>
    <property type="match status" value="1"/>
</dbReference>
<dbReference type="FunFam" id="2.130.10.10:FF:000005">
    <property type="entry name" value="Putative echinoderm microtubule-associated protein-like 1"/>
    <property type="match status" value="1"/>
</dbReference>
<dbReference type="Gene3D" id="2.130.10.10">
    <property type="entry name" value="YVTN repeat-like/Quinoprotein amine dehydrogenase"/>
    <property type="match status" value="2"/>
</dbReference>
<dbReference type="InterPro" id="IPR055442">
    <property type="entry name" value="Beta-prop_EML-like_2nd"/>
</dbReference>
<dbReference type="InterPro" id="IPR055439">
    <property type="entry name" value="Beta-prop_EML_1st"/>
</dbReference>
<dbReference type="InterPro" id="IPR005108">
    <property type="entry name" value="HELP"/>
</dbReference>
<dbReference type="InterPro" id="IPR011047">
    <property type="entry name" value="Quinoprotein_ADH-like_sf"/>
</dbReference>
<dbReference type="InterPro" id="IPR015943">
    <property type="entry name" value="WD40/YVTN_repeat-like_dom_sf"/>
</dbReference>
<dbReference type="InterPro" id="IPR001680">
    <property type="entry name" value="WD40_rpt"/>
</dbReference>
<dbReference type="InterPro" id="IPR050630">
    <property type="entry name" value="WD_repeat_EMAP"/>
</dbReference>
<dbReference type="PANTHER" id="PTHR13720:SF50">
    <property type="entry name" value="ECHINODERM MICROTUBULE-ASSOCIATED PROTEIN-LIKE 2"/>
    <property type="match status" value="1"/>
</dbReference>
<dbReference type="PANTHER" id="PTHR13720">
    <property type="entry name" value="WD-40 REPEAT PROTEIN"/>
    <property type="match status" value="1"/>
</dbReference>
<dbReference type="Pfam" id="PF23409">
    <property type="entry name" value="Beta-prop_EML"/>
    <property type="match status" value="1"/>
</dbReference>
<dbReference type="Pfam" id="PF23414">
    <property type="entry name" value="Beta-prop_EML_2"/>
    <property type="match status" value="1"/>
</dbReference>
<dbReference type="Pfam" id="PF03451">
    <property type="entry name" value="HELP"/>
    <property type="match status" value="1"/>
</dbReference>
<dbReference type="SMART" id="SM00320">
    <property type="entry name" value="WD40"/>
    <property type="match status" value="11"/>
</dbReference>
<dbReference type="SUPFAM" id="SSF50998">
    <property type="entry name" value="Quinoprotein alcohol dehydrogenase-like"/>
    <property type="match status" value="2"/>
</dbReference>
<dbReference type="PROSITE" id="PS50082">
    <property type="entry name" value="WD_REPEATS_2"/>
    <property type="match status" value="4"/>
</dbReference>
<dbReference type="PROSITE" id="PS50294">
    <property type="entry name" value="WD_REPEATS_REGION"/>
    <property type="match status" value="1"/>
</dbReference>
<proteinExistence type="evidence at protein level"/>
<keyword id="KW-0025">Alternative splicing</keyword>
<keyword id="KW-0175">Coiled coil</keyword>
<keyword id="KW-0963">Cytoplasm</keyword>
<keyword id="KW-0206">Cytoskeleton</keyword>
<keyword id="KW-0493">Microtubule</keyword>
<keyword id="KW-1185">Reference proteome</keyword>
<keyword id="KW-0677">Repeat</keyword>
<keyword id="KW-0853">WD repeat</keyword>
<accession>Q7TNG5</accession>
<accession>E9QK48</accession>
<accession>Q9DAS8</accession>
<name>EMAL2_MOUSE</name>
<reference key="1">
    <citation type="journal article" date="2005" name="Science">
        <title>The transcriptional landscape of the mammalian genome.</title>
        <authorList>
            <person name="Carninci P."/>
            <person name="Kasukawa T."/>
            <person name="Katayama S."/>
            <person name="Gough J."/>
            <person name="Frith M.C."/>
            <person name="Maeda N."/>
            <person name="Oyama R."/>
            <person name="Ravasi T."/>
            <person name="Lenhard B."/>
            <person name="Wells C."/>
            <person name="Kodzius R."/>
            <person name="Shimokawa K."/>
            <person name="Bajic V.B."/>
            <person name="Brenner S.E."/>
            <person name="Batalov S."/>
            <person name="Forrest A.R."/>
            <person name="Zavolan M."/>
            <person name="Davis M.J."/>
            <person name="Wilming L.G."/>
            <person name="Aidinis V."/>
            <person name="Allen J.E."/>
            <person name="Ambesi-Impiombato A."/>
            <person name="Apweiler R."/>
            <person name="Aturaliya R.N."/>
            <person name="Bailey T.L."/>
            <person name="Bansal M."/>
            <person name="Baxter L."/>
            <person name="Beisel K.W."/>
            <person name="Bersano T."/>
            <person name="Bono H."/>
            <person name="Chalk A.M."/>
            <person name="Chiu K.P."/>
            <person name="Choudhary V."/>
            <person name="Christoffels A."/>
            <person name="Clutterbuck D.R."/>
            <person name="Crowe M.L."/>
            <person name="Dalla E."/>
            <person name="Dalrymple B.P."/>
            <person name="de Bono B."/>
            <person name="Della Gatta G."/>
            <person name="di Bernardo D."/>
            <person name="Down T."/>
            <person name="Engstrom P."/>
            <person name="Fagiolini M."/>
            <person name="Faulkner G."/>
            <person name="Fletcher C.F."/>
            <person name="Fukushima T."/>
            <person name="Furuno M."/>
            <person name="Futaki S."/>
            <person name="Gariboldi M."/>
            <person name="Georgii-Hemming P."/>
            <person name="Gingeras T.R."/>
            <person name="Gojobori T."/>
            <person name="Green R.E."/>
            <person name="Gustincich S."/>
            <person name="Harbers M."/>
            <person name="Hayashi Y."/>
            <person name="Hensch T.K."/>
            <person name="Hirokawa N."/>
            <person name="Hill D."/>
            <person name="Huminiecki L."/>
            <person name="Iacono M."/>
            <person name="Ikeo K."/>
            <person name="Iwama A."/>
            <person name="Ishikawa T."/>
            <person name="Jakt M."/>
            <person name="Kanapin A."/>
            <person name="Katoh M."/>
            <person name="Kawasawa Y."/>
            <person name="Kelso J."/>
            <person name="Kitamura H."/>
            <person name="Kitano H."/>
            <person name="Kollias G."/>
            <person name="Krishnan S.P."/>
            <person name="Kruger A."/>
            <person name="Kummerfeld S.K."/>
            <person name="Kurochkin I.V."/>
            <person name="Lareau L.F."/>
            <person name="Lazarevic D."/>
            <person name="Lipovich L."/>
            <person name="Liu J."/>
            <person name="Liuni S."/>
            <person name="McWilliam S."/>
            <person name="Madan Babu M."/>
            <person name="Madera M."/>
            <person name="Marchionni L."/>
            <person name="Matsuda H."/>
            <person name="Matsuzawa S."/>
            <person name="Miki H."/>
            <person name="Mignone F."/>
            <person name="Miyake S."/>
            <person name="Morris K."/>
            <person name="Mottagui-Tabar S."/>
            <person name="Mulder N."/>
            <person name="Nakano N."/>
            <person name="Nakauchi H."/>
            <person name="Ng P."/>
            <person name="Nilsson R."/>
            <person name="Nishiguchi S."/>
            <person name="Nishikawa S."/>
            <person name="Nori F."/>
            <person name="Ohara O."/>
            <person name="Okazaki Y."/>
            <person name="Orlando V."/>
            <person name="Pang K.C."/>
            <person name="Pavan W.J."/>
            <person name="Pavesi G."/>
            <person name="Pesole G."/>
            <person name="Petrovsky N."/>
            <person name="Piazza S."/>
            <person name="Reed J."/>
            <person name="Reid J.F."/>
            <person name="Ring B.Z."/>
            <person name="Ringwald M."/>
            <person name="Rost B."/>
            <person name="Ruan Y."/>
            <person name="Salzberg S.L."/>
            <person name="Sandelin A."/>
            <person name="Schneider C."/>
            <person name="Schoenbach C."/>
            <person name="Sekiguchi K."/>
            <person name="Semple C.A."/>
            <person name="Seno S."/>
            <person name="Sessa L."/>
            <person name="Sheng Y."/>
            <person name="Shibata Y."/>
            <person name="Shimada H."/>
            <person name="Shimada K."/>
            <person name="Silva D."/>
            <person name="Sinclair B."/>
            <person name="Sperling S."/>
            <person name="Stupka E."/>
            <person name="Sugiura K."/>
            <person name="Sultana R."/>
            <person name="Takenaka Y."/>
            <person name="Taki K."/>
            <person name="Tammoja K."/>
            <person name="Tan S.L."/>
            <person name="Tang S."/>
            <person name="Taylor M.S."/>
            <person name="Tegner J."/>
            <person name="Teichmann S.A."/>
            <person name="Ueda H.R."/>
            <person name="van Nimwegen E."/>
            <person name="Verardo R."/>
            <person name="Wei C.L."/>
            <person name="Yagi K."/>
            <person name="Yamanishi H."/>
            <person name="Zabarovsky E."/>
            <person name="Zhu S."/>
            <person name="Zimmer A."/>
            <person name="Hide W."/>
            <person name="Bult C."/>
            <person name="Grimmond S.M."/>
            <person name="Teasdale R.D."/>
            <person name="Liu E.T."/>
            <person name="Brusic V."/>
            <person name="Quackenbush J."/>
            <person name="Wahlestedt C."/>
            <person name="Mattick J.S."/>
            <person name="Hume D.A."/>
            <person name="Kai C."/>
            <person name="Sasaki D."/>
            <person name="Tomaru Y."/>
            <person name="Fukuda S."/>
            <person name="Kanamori-Katayama M."/>
            <person name="Suzuki M."/>
            <person name="Aoki J."/>
            <person name="Arakawa T."/>
            <person name="Iida J."/>
            <person name="Imamura K."/>
            <person name="Itoh M."/>
            <person name="Kato T."/>
            <person name="Kawaji H."/>
            <person name="Kawagashira N."/>
            <person name="Kawashima T."/>
            <person name="Kojima M."/>
            <person name="Kondo S."/>
            <person name="Konno H."/>
            <person name="Nakano K."/>
            <person name="Ninomiya N."/>
            <person name="Nishio T."/>
            <person name="Okada M."/>
            <person name="Plessy C."/>
            <person name="Shibata K."/>
            <person name="Shiraki T."/>
            <person name="Suzuki S."/>
            <person name="Tagami M."/>
            <person name="Waki K."/>
            <person name="Watahiki A."/>
            <person name="Okamura-Oho Y."/>
            <person name="Suzuki H."/>
            <person name="Kawai J."/>
            <person name="Hayashizaki Y."/>
        </authorList>
    </citation>
    <scope>NUCLEOTIDE SEQUENCE [LARGE SCALE MRNA] (ISOFORM 2)</scope>
    <source>
        <strain>C57BL/6J</strain>
        <tissue>Placenta</tissue>
    </source>
</reference>
<reference key="2">
    <citation type="journal article" date="2009" name="PLoS Biol.">
        <title>Lineage-specific biology revealed by a finished genome assembly of the mouse.</title>
        <authorList>
            <person name="Church D.M."/>
            <person name="Goodstadt L."/>
            <person name="Hillier L.W."/>
            <person name="Zody M.C."/>
            <person name="Goldstein S."/>
            <person name="She X."/>
            <person name="Bult C.J."/>
            <person name="Agarwala R."/>
            <person name="Cherry J.L."/>
            <person name="DiCuccio M."/>
            <person name="Hlavina W."/>
            <person name="Kapustin Y."/>
            <person name="Meric P."/>
            <person name="Maglott D."/>
            <person name="Birtle Z."/>
            <person name="Marques A.C."/>
            <person name="Graves T."/>
            <person name="Zhou S."/>
            <person name="Teague B."/>
            <person name="Potamousis K."/>
            <person name="Churas C."/>
            <person name="Place M."/>
            <person name="Herschleb J."/>
            <person name="Runnheim R."/>
            <person name="Forrest D."/>
            <person name="Amos-Landgraf J."/>
            <person name="Schwartz D.C."/>
            <person name="Cheng Z."/>
            <person name="Lindblad-Toh K."/>
            <person name="Eichler E.E."/>
            <person name="Ponting C.P."/>
        </authorList>
    </citation>
    <scope>NUCLEOTIDE SEQUENCE [LARGE SCALE GENOMIC DNA]</scope>
    <source>
        <strain>C57BL/6J</strain>
    </source>
</reference>
<reference key="3">
    <citation type="journal article" date="2004" name="Genome Res.">
        <title>The status, quality, and expansion of the NIH full-length cDNA project: the Mammalian Gene Collection (MGC).</title>
        <authorList>
            <consortium name="The MGC Project Team"/>
        </authorList>
    </citation>
    <scope>NUCLEOTIDE SEQUENCE [LARGE SCALE MRNA] (ISOFORM 1)</scope>
    <source>
        <strain>FVB/N</strain>
        <tissue>Colon</tissue>
    </source>
</reference>
<reference key="4">
    <citation type="journal article" date="2010" name="Cell">
        <title>A tissue-specific atlas of mouse protein phosphorylation and expression.</title>
        <authorList>
            <person name="Huttlin E.L."/>
            <person name="Jedrychowski M.P."/>
            <person name="Elias J.E."/>
            <person name="Goswami T."/>
            <person name="Rad R."/>
            <person name="Beausoleil S.A."/>
            <person name="Villen J."/>
            <person name="Haas W."/>
            <person name="Sowa M.E."/>
            <person name="Gygi S.P."/>
        </authorList>
    </citation>
    <scope>IDENTIFICATION BY MASS SPECTROMETRY [LARGE SCALE ANALYSIS]</scope>
    <source>
        <tissue>Brain</tissue>
        <tissue>Brown adipose tissue</tissue>
        <tissue>Heart</tissue>
        <tissue>Kidney</tissue>
        <tissue>Liver</tissue>
        <tissue>Lung</tissue>
        <tissue>Pancreas</tissue>
        <tissue>Spleen</tissue>
        <tissue>Testis</tissue>
    </source>
</reference>
<gene>
    <name type="primary">Eml2</name>
</gene>
<comment type="function">
    <text evidence="2">Tubulin binding protein that inhibits microtubule nucleation and growth, resulting in shorter microtubules.</text>
</comment>
<comment type="subunit">
    <text evidence="2 3">Interacts with GRID2 and may also interact with GRID1. Interacts with EML3. Binds unpolymerized tubulins via its WD repeat region.</text>
</comment>
<comment type="subcellular location">
    <subcellularLocation>
        <location evidence="2">Cytoplasm</location>
        <location evidence="2">Cytoskeleton</location>
    </subcellularLocation>
    <subcellularLocation>
        <location evidence="2">Cytoplasm</location>
        <location evidence="2">Cytoskeleton</location>
        <location evidence="2">Spindle</location>
    </subcellularLocation>
    <text evidence="2">Colocalizes with the microtubule cytoskeleton. Colocalizes with the mitotic spindle.</text>
</comment>
<comment type="alternative products">
    <event type="alternative splicing"/>
    <isoform>
        <id>Q7TNG5-1</id>
        <name>1</name>
        <sequence type="displayed"/>
    </isoform>
    <isoform>
        <id>Q7TNG5-2</id>
        <name>2</name>
        <sequence type="described" ref="VSP_024480"/>
    </isoform>
    <isoform>
        <id>Q7TNG5-3</id>
        <name>3</name>
        <sequence type="described" ref="VSP_061498"/>
    </isoform>
</comment>
<comment type="domain">
    <text evidence="1">Contains a tandem atypical propeller in EMLs (TAPE) domain. The N-terminal beta-propeller is formed by canonical WD repeats; in contrast, the second beta-propeller contains one blade that is formed by discontinuous parts of the polypeptide chain (By similarity).</text>
</comment>
<comment type="similarity">
    <text evidence="6">Belongs to the WD repeat EMAP family.</text>
</comment>
<comment type="sequence caution" evidence="6">
    <conflict type="frameshift">
        <sequence resource="EMBL-CDS" id="BAB24122"/>
    </conflict>
</comment>
<feature type="chain" id="PRO_0000284388" description="Echinoderm microtubule-associated protein-like 2">
    <location>
        <begin position="1"/>
        <end position="649"/>
    </location>
</feature>
<feature type="repeat" description="WD 1">
    <location>
        <begin position="56"/>
        <end position="93"/>
    </location>
</feature>
<feature type="repeat" description="WD 2">
    <location>
        <begin position="97"/>
        <end position="144"/>
    </location>
</feature>
<feature type="repeat" description="WD 3">
    <location>
        <begin position="151"/>
        <end position="192"/>
    </location>
</feature>
<feature type="repeat" description="WD 4">
    <location>
        <begin position="195"/>
        <end position="234"/>
    </location>
</feature>
<feature type="repeat" description="WD 5">
    <location>
        <begin position="241"/>
        <end position="280"/>
    </location>
</feature>
<feature type="repeat" description="WD 6">
    <location>
        <begin position="285"/>
        <end position="323"/>
    </location>
</feature>
<feature type="repeat" description="WD 7">
    <location>
        <begin position="369"/>
        <end position="406"/>
    </location>
</feature>
<feature type="repeat" description="WD 8">
    <location>
        <begin position="410"/>
        <end position="447"/>
    </location>
</feature>
<feature type="repeat" description="WD 9">
    <location>
        <begin position="452"/>
        <end position="489"/>
    </location>
</feature>
<feature type="repeat" description="WD 10">
    <location>
        <begin position="495"/>
        <end position="535"/>
    </location>
</feature>
<feature type="repeat" description="WD 11">
    <location>
        <begin position="564"/>
        <end position="602"/>
    </location>
</feature>
<feature type="repeat" description="WD 12">
    <location>
        <begin position="609"/>
        <end position="648"/>
    </location>
</feature>
<feature type="region of interest" description="Tandem atypical propeller in EMLs" evidence="1">
    <location>
        <begin position="10"/>
        <end position="649"/>
    </location>
</feature>
<feature type="splice variant" id="VSP_061498" description="In isoform 3.">
    <original>MSSFGI</original>
    <variation>MATGGRAWGGDRARAGAAGAGGGCGGAMAERGPAFCGLYDTSSLLQYCNDDNLSGTSGMEVDDRVSALEQRLQLQEDELAVLKAALADALRRLRACEEQGAALRARSTPKGRAPPRLGTTASVCQLLKGLPTRTPLNGSGPPRRVGGYATSPSSPKKEASSGRSSRRYLSPERLASVRREDPRSRTTSSSSNCSAKKE</variation>
    <location>
        <begin position="1"/>
        <end position="6"/>
    </location>
</feature>
<feature type="splice variant" id="VSP_024480" description="In isoform 2." evidence="5">
    <original>Y</original>
    <variation>YPLTSSLSALLEEALGFSSY</variation>
    <location>
        <position position="61"/>
    </location>
</feature>
<feature type="sequence conflict" description="In Ref. 1; BAB24122." evidence="6" ref="1">
    <original>K</original>
    <variation>R</variation>
    <location>
        <position position="251"/>
    </location>
</feature>
<feature type="coiled-coil region" evidence="4">
    <location sequence="Q7TNG5-3">
        <begin position="65"/>
        <end position="106"/>
    </location>
</feature>
<sequence length="649" mass="70734">MSSFGIGKTKEVIFSMEEGSVKMFLRGRPVPMLIPDELAPTYSLDTRSELPSSRLKLDWVYGYRGRDCRANLYLLPTGEVVYFVASVAVLYSVEEQRQRHYLGHNDDIKCLAVHPDMVTIATGQVAGTTKEGKPLPPHVRVWDSVSLSTLHVLGLGVFDRAVCCVAFSKSNGGNLLCAVDESNDHVLSVWDWAKESKVVDSKCSNEAVLVATFHPTDPSLLITCGKSHIYFWSLEGGSLSKRQGLFEKHEKPKYVLCVTFLEGGDVVTGDSGGNLYVWGKGGNRITQEVQGAHDGGVFALCALRDGTLVSGGGRDRRVVLWGSDYSKVQEVEVPEDFGPVRTVAEGRGDTLYVGTTRNSILLGSVHTGFSLLVQGHVEELWGLATHPSRAQFVTCGQDKLVHLWSSETHQPVWSRSIEDPARSAGFHPSGSVLAVGTVTGRWLLLDTETHDLVAIHTDGNEQISVVSFSPDGAYLAVGSHDNLVYVYTVDQGGRKVSRLGKCSGHSSFITHLDWAQDSTCFVTNSGDYEILYWDPVTCKQITSADTVRNVEWATATCVLGFGVFGIWPEGADGTDINAVARSHDGKLLVSADDFGKVHLFSYPCCQPRALSHKYGGHSSHVTNVAFLWDDSMALTTGGKDTSVLQWRVA</sequence>
<protein>
    <recommendedName>
        <fullName>Echinoderm microtubule-associated protein-like 2</fullName>
        <shortName>EMAP-2</shortName>
    </recommendedName>
</protein>
<organism>
    <name type="scientific">Mus musculus</name>
    <name type="common">Mouse</name>
    <dbReference type="NCBI Taxonomy" id="10090"/>
    <lineage>
        <taxon>Eukaryota</taxon>
        <taxon>Metazoa</taxon>
        <taxon>Chordata</taxon>
        <taxon>Craniata</taxon>
        <taxon>Vertebrata</taxon>
        <taxon>Euteleostomi</taxon>
        <taxon>Mammalia</taxon>
        <taxon>Eutheria</taxon>
        <taxon>Euarchontoglires</taxon>
        <taxon>Glires</taxon>
        <taxon>Rodentia</taxon>
        <taxon>Myomorpha</taxon>
        <taxon>Muroidea</taxon>
        <taxon>Muridae</taxon>
        <taxon>Murinae</taxon>
        <taxon>Mus</taxon>
        <taxon>Mus</taxon>
    </lineage>
</organism>
<evidence type="ECO:0000250" key="1"/>
<evidence type="ECO:0000250" key="2">
    <source>
        <dbReference type="UniProtKB" id="O95834"/>
    </source>
</evidence>
<evidence type="ECO:0000250" key="3">
    <source>
        <dbReference type="UniProtKB" id="Q6P6T4"/>
    </source>
</evidence>
<evidence type="ECO:0000255" key="4"/>
<evidence type="ECO:0000303" key="5">
    <source>
    </source>
</evidence>
<evidence type="ECO:0000305" key="6"/>